<keyword id="KW-0025">Alternative splicing</keyword>
<keyword id="KW-0238">DNA-binding</keyword>
<keyword id="KW-0479">Metal-binding</keyword>
<keyword id="KW-0539">Nucleus</keyword>
<keyword id="KW-1267">Proteomics identification</keyword>
<keyword id="KW-1185">Reference proteome</keyword>
<keyword id="KW-0677">Repeat</keyword>
<keyword id="KW-0804">Transcription</keyword>
<keyword id="KW-0805">Transcription regulation</keyword>
<keyword id="KW-0862">Zinc</keyword>
<keyword id="KW-0863">Zinc-finger</keyword>
<proteinExistence type="evidence at protein level"/>
<sequence>MGPPLAPRPAHVPGEAGPRRTRESRPGAVSFADVAVYFSPEEWECLRPAQRALYRDVMRETFGHLGALGFSVPKPAFISWVEGEVEAWSPEAQDPDGESSAAFSRGQGQEAGSRDGNEEKERLKKCPKQKEVAHEVAVKEWWPSVACPEFCNPRQSPMNPWLKDTLTRRLPHSCPDCGRNFSYPSLLASHQRVHSGERPFSCGQCQARFSQRRYLLQHQFIHTGEKPYPCPDCGRRFRQRGSLAIHRRAHTGEKPYACSDCKSRFTYPYLLAIHQRKHTGEKPYSCPDCSLRFAYTSLLAIHRRIHTGEKPYPCPDCGRRFTYSSLLLSHRRIHSDSRPFPCVECGKGFKRKTALEAHRWIHRSCSERRAWQQAVVGRSEPIPVLGGKDPPVHFRHFPDIFQECG</sequence>
<reference key="1">
    <citation type="journal article" date="2004" name="Nat. Genet.">
        <title>Complete sequencing and characterization of 21,243 full-length human cDNAs.</title>
        <authorList>
            <person name="Ota T."/>
            <person name="Suzuki Y."/>
            <person name="Nishikawa T."/>
            <person name="Otsuki T."/>
            <person name="Sugiyama T."/>
            <person name="Irie R."/>
            <person name="Wakamatsu A."/>
            <person name="Hayashi K."/>
            <person name="Sato H."/>
            <person name="Nagai K."/>
            <person name="Kimura K."/>
            <person name="Makita H."/>
            <person name="Sekine M."/>
            <person name="Obayashi M."/>
            <person name="Nishi T."/>
            <person name="Shibahara T."/>
            <person name="Tanaka T."/>
            <person name="Ishii S."/>
            <person name="Yamamoto J."/>
            <person name="Saito K."/>
            <person name="Kawai Y."/>
            <person name="Isono Y."/>
            <person name="Nakamura Y."/>
            <person name="Nagahari K."/>
            <person name="Murakami K."/>
            <person name="Yasuda T."/>
            <person name="Iwayanagi T."/>
            <person name="Wagatsuma M."/>
            <person name="Shiratori A."/>
            <person name="Sudo H."/>
            <person name="Hosoiri T."/>
            <person name="Kaku Y."/>
            <person name="Kodaira H."/>
            <person name="Kondo H."/>
            <person name="Sugawara M."/>
            <person name="Takahashi M."/>
            <person name="Kanda K."/>
            <person name="Yokoi T."/>
            <person name="Furuya T."/>
            <person name="Kikkawa E."/>
            <person name="Omura Y."/>
            <person name="Abe K."/>
            <person name="Kamihara K."/>
            <person name="Katsuta N."/>
            <person name="Sato K."/>
            <person name="Tanikawa M."/>
            <person name="Yamazaki M."/>
            <person name="Ninomiya K."/>
            <person name="Ishibashi T."/>
            <person name="Yamashita H."/>
            <person name="Murakawa K."/>
            <person name="Fujimori K."/>
            <person name="Tanai H."/>
            <person name="Kimata M."/>
            <person name="Watanabe M."/>
            <person name="Hiraoka S."/>
            <person name="Chiba Y."/>
            <person name="Ishida S."/>
            <person name="Ono Y."/>
            <person name="Takiguchi S."/>
            <person name="Watanabe S."/>
            <person name="Yosida M."/>
            <person name="Hotuta T."/>
            <person name="Kusano J."/>
            <person name="Kanehori K."/>
            <person name="Takahashi-Fujii A."/>
            <person name="Hara H."/>
            <person name="Tanase T.-O."/>
            <person name="Nomura Y."/>
            <person name="Togiya S."/>
            <person name="Komai F."/>
            <person name="Hara R."/>
            <person name="Takeuchi K."/>
            <person name="Arita M."/>
            <person name="Imose N."/>
            <person name="Musashino K."/>
            <person name="Yuuki H."/>
            <person name="Oshima A."/>
            <person name="Sasaki N."/>
            <person name="Aotsuka S."/>
            <person name="Yoshikawa Y."/>
            <person name="Matsunawa H."/>
            <person name="Ichihara T."/>
            <person name="Shiohata N."/>
            <person name="Sano S."/>
            <person name="Moriya S."/>
            <person name="Momiyama H."/>
            <person name="Satoh N."/>
            <person name="Takami S."/>
            <person name="Terashima Y."/>
            <person name="Suzuki O."/>
            <person name="Nakagawa S."/>
            <person name="Senoh A."/>
            <person name="Mizoguchi H."/>
            <person name="Goto Y."/>
            <person name="Shimizu F."/>
            <person name="Wakebe H."/>
            <person name="Hishigaki H."/>
            <person name="Watanabe T."/>
            <person name="Sugiyama A."/>
            <person name="Takemoto M."/>
            <person name="Kawakami B."/>
            <person name="Yamazaki M."/>
            <person name="Watanabe K."/>
            <person name="Kumagai A."/>
            <person name="Itakura S."/>
            <person name="Fukuzumi Y."/>
            <person name="Fujimori Y."/>
            <person name="Komiyama M."/>
            <person name="Tashiro H."/>
            <person name="Tanigami A."/>
            <person name="Fujiwara T."/>
            <person name="Ono T."/>
            <person name="Yamada K."/>
            <person name="Fujii Y."/>
            <person name="Ozaki K."/>
            <person name="Hirao M."/>
            <person name="Ohmori Y."/>
            <person name="Kawabata A."/>
            <person name="Hikiji T."/>
            <person name="Kobatake N."/>
            <person name="Inagaki H."/>
            <person name="Ikema Y."/>
            <person name="Okamoto S."/>
            <person name="Okitani R."/>
            <person name="Kawakami T."/>
            <person name="Noguchi S."/>
            <person name="Itoh T."/>
            <person name="Shigeta K."/>
            <person name="Senba T."/>
            <person name="Matsumura K."/>
            <person name="Nakajima Y."/>
            <person name="Mizuno T."/>
            <person name="Morinaga M."/>
            <person name="Sasaki M."/>
            <person name="Togashi T."/>
            <person name="Oyama M."/>
            <person name="Hata H."/>
            <person name="Watanabe M."/>
            <person name="Komatsu T."/>
            <person name="Mizushima-Sugano J."/>
            <person name="Satoh T."/>
            <person name="Shirai Y."/>
            <person name="Takahashi Y."/>
            <person name="Nakagawa K."/>
            <person name="Okumura K."/>
            <person name="Nagase T."/>
            <person name="Nomura N."/>
            <person name="Kikuchi H."/>
            <person name="Masuho Y."/>
            <person name="Yamashita R."/>
            <person name="Nakai K."/>
            <person name="Yada T."/>
            <person name="Nakamura Y."/>
            <person name="Ohara O."/>
            <person name="Isogai T."/>
            <person name="Sugano S."/>
        </authorList>
    </citation>
    <scope>NUCLEOTIDE SEQUENCE [LARGE SCALE MRNA] (ISOFORMS 1 AND 2)</scope>
    <source>
        <tissue>Peripheral blood monocyte</tissue>
        <tissue>Testis</tissue>
    </source>
</reference>
<reference key="2">
    <citation type="submission" date="2005-07" db="EMBL/GenBank/DDBJ databases">
        <authorList>
            <person name="Mural R.J."/>
            <person name="Istrail S."/>
            <person name="Sutton G.G."/>
            <person name="Florea L."/>
            <person name="Halpern A.L."/>
            <person name="Mobarry C.M."/>
            <person name="Lippert R."/>
            <person name="Walenz B."/>
            <person name="Shatkay H."/>
            <person name="Dew I."/>
            <person name="Miller J.R."/>
            <person name="Flanigan M.J."/>
            <person name="Edwards N.J."/>
            <person name="Bolanos R."/>
            <person name="Fasulo D."/>
            <person name="Halldorsson B.V."/>
            <person name="Hannenhalli S."/>
            <person name="Turner R."/>
            <person name="Yooseph S."/>
            <person name="Lu F."/>
            <person name="Nusskern D.R."/>
            <person name="Shue B.C."/>
            <person name="Zheng X.H."/>
            <person name="Zhong F."/>
            <person name="Delcher A.L."/>
            <person name="Huson D.H."/>
            <person name="Kravitz S.A."/>
            <person name="Mouchard L."/>
            <person name="Reinert K."/>
            <person name="Remington K.A."/>
            <person name="Clark A.G."/>
            <person name="Waterman M.S."/>
            <person name="Eichler E.E."/>
            <person name="Adams M.D."/>
            <person name="Hunkapiller M.W."/>
            <person name="Myers E.W."/>
            <person name="Venter J.C."/>
        </authorList>
    </citation>
    <scope>NUCLEOTIDE SEQUENCE [LARGE SCALE GENOMIC DNA]</scope>
</reference>
<reference key="3">
    <citation type="journal article" date="2004" name="Genome Res.">
        <title>The status, quality, and expansion of the NIH full-length cDNA project: the Mammalian Gene Collection (MGC).</title>
        <authorList>
            <consortium name="The MGC Project Team"/>
        </authorList>
    </citation>
    <scope>NUCLEOTIDE SEQUENCE [LARGE SCALE MRNA] (ISOFORM 1)</scope>
    <source>
        <tissue>Brain</tissue>
    </source>
</reference>
<reference key="4">
    <citation type="journal article" date="2015" name="Brain">
        <title>Heterozygous HTRA1 mutations are associated with autosomal dominant cerebral small vessel disease.</title>
        <authorList>
            <person name="Verdura E."/>
            <person name="Herve D."/>
            <person name="Scharrer E."/>
            <person name="del Mar Amador M."/>
            <person name="Guyant-Marechal L."/>
            <person name="Philippi A."/>
            <person name="Corlobe A."/>
            <person name="Bergametti F."/>
            <person name="Gazal S."/>
            <person name="Prieto-Morin C."/>
            <person name="Beaufort N."/>
            <person name="Le Bail B."/>
            <person name="Viakhireva I."/>
            <person name="Dichgans M."/>
            <person name="Chabriat H."/>
            <person name="Haffner C."/>
            <person name="Tournier-Lasserve E."/>
        </authorList>
    </citation>
    <scope>VARIANTS GLY-316 AND ARG-337</scope>
</reference>
<name>ZN785_HUMAN</name>
<comment type="function">
    <text evidence="1">May be involved in transcriptional regulation.</text>
</comment>
<comment type="interaction">
    <interactant intactId="EBI-3925400">
        <id>A8K8V0</id>
    </interactant>
    <interactant intactId="EBI-357530">
        <id>Q9ULX6</id>
        <label>AKAP8L</label>
    </interactant>
    <organismsDiffer>false</organismsDiffer>
    <experiments>3</experiments>
</comment>
<comment type="interaction">
    <interactant intactId="EBI-3925400">
        <id>A8K8V0</id>
    </interactant>
    <interactant intactId="EBI-12011224">
        <id>Q9NPB3</id>
        <label>CABP2</label>
    </interactant>
    <organismsDiffer>false</organismsDiffer>
    <experiments>3</experiments>
</comment>
<comment type="interaction">
    <interactant intactId="EBI-3925400">
        <id>A8K8V0</id>
    </interactant>
    <interactant intactId="EBI-11524851">
        <id>Q8NA61-2</id>
        <label>CBY2</label>
    </interactant>
    <organismsDiffer>false</organismsDiffer>
    <experiments>3</experiments>
</comment>
<comment type="interaction">
    <interactant intactId="EBI-3925400">
        <id>A8K8V0</id>
    </interactant>
    <interactant intactId="EBI-748961">
        <id>O95273</id>
        <label>CCNDBP1</label>
    </interactant>
    <organismsDiffer>false</organismsDiffer>
    <experiments>3</experiments>
</comment>
<comment type="interaction">
    <interactant intactId="EBI-3925400">
        <id>A8K8V0</id>
    </interactant>
    <interactant intactId="EBI-739624">
        <id>Q8NHQ1</id>
        <label>CEP70</label>
    </interactant>
    <organismsDiffer>false</organismsDiffer>
    <experiments>3</experiments>
</comment>
<comment type="interaction">
    <interactant intactId="EBI-3925400">
        <id>A8K8V0</id>
    </interactant>
    <interactant intactId="EBI-10174566">
        <id>A2ABF9</id>
        <label>EHMT2</label>
    </interactant>
    <organismsDiffer>false</organismsDiffer>
    <experiments>3</experiments>
</comment>
<comment type="interaction">
    <interactant intactId="EBI-3925400">
        <id>A8K8V0</id>
    </interactant>
    <interactant intactId="EBI-5916454">
        <id>A6NEM1</id>
        <label>GOLGA6L9</label>
    </interactant>
    <organismsDiffer>false</organismsDiffer>
    <experiments>3</experiments>
</comment>
<comment type="interaction">
    <interactant intactId="EBI-3925400">
        <id>A8K8V0</id>
    </interactant>
    <interactant intactId="EBI-746704">
        <id>Q9UJC3</id>
        <label>HOOK1</label>
    </interactant>
    <organismsDiffer>false</organismsDiffer>
    <experiments>3</experiments>
</comment>
<comment type="interaction">
    <interactant intactId="EBI-3925400">
        <id>A8K8V0</id>
    </interactant>
    <interactant intactId="EBI-14069005">
        <id>Q9BVG8-5</id>
        <label>KIFC3</label>
    </interactant>
    <organismsDiffer>false</organismsDiffer>
    <experiments>3</experiments>
</comment>
<comment type="interaction">
    <interactant intactId="EBI-3925400">
        <id>A8K8V0</id>
    </interactant>
    <interactant intactId="EBI-11958506">
        <id>O76013-2</id>
        <label>KRT36</label>
    </interactant>
    <organismsDiffer>false</organismsDiffer>
    <experiments>3</experiments>
</comment>
<comment type="interaction">
    <interactant intactId="EBI-3925400">
        <id>A8K8V0</id>
    </interactant>
    <interactant intactId="EBI-10172150">
        <id>P60370</id>
        <label>KRTAP10-5</label>
    </interactant>
    <organismsDiffer>false</organismsDiffer>
    <experiments>3</experiments>
</comment>
<comment type="interaction">
    <interactant intactId="EBI-3925400">
        <id>A8K8V0</id>
    </interactant>
    <interactant intactId="EBI-10176379">
        <id>P59991</id>
        <label>KRTAP12-2</label>
    </interactant>
    <organismsDiffer>false</organismsDiffer>
    <experiments>3</experiments>
</comment>
<comment type="interaction">
    <interactant intactId="EBI-3925400">
        <id>A8K8V0</id>
    </interactant>
    <interactant intactId="EBI-724076">
        <id>Q99750</id>
        <label>MDFI</label>
    </interactant>
    <organismsDiffer>false</organismsDiffer>
    <experiments>3</experiments>
</comment>
<comment type="interaction">
    <interactant intactId="EBI-3925400">
        <id>A8K8V0</id>
    </interactant>
    <interactant intactId="EBI-10172526">
        <id>Q9UJV3-2</id>
        <label>MID2</label>
    </interactant>
    <organismsDiffer>false</organismsDiffer>
    <experiments>3</experiments>
</comment>
<comment type="interaction">
    <interactant intactId="EBI-3925400">
        <id>A8K8V0</id>
    </interactant>
    <interactant intactId="EBI-742948">
        <id>Q5JR59</id>
        <label>MTUS2</label>
    </interactant>
    <organismsDiffer>false</organismsDiffer>
    <experiments>4</experiments>
</comment>
<comment type="interaction">
    <interactant intactId="EBI-3925400">
        <id>A8K8V0</id>
    </interactant>
    <interactant intactId="EBI-11522433">
        <id>Q5JR59-3</id>
        <label>MTUS2</label>
    </interactant>
    <organismsDiffer>false</organismsDiffer>
    <experiments>3</experiments>
</comment>
<comment type="interaction">
    <interactant intactId="EBI-3925400">
        <id>A8K8V0</id>
    </interactant>
    <interactant intactId="EBI-302355">
        <id>Q9UL42</id>
        <label>PNMA2</label>
    </interactant>
    <organismsDiffer>false</organismsDiffer>
    <experiments>4</experiments>
</comment>
<comment type="interaction">
    <interactant intactId="EBI-3925400">
        <id>A8K8V0</id>
    </interactant>
    <interactant intactId="EBI-712466">
        <id>Q16623</id>
        <label>STX1A</label>
    </interactant>
    <organismsDiffer>false</organismsDiffer>
    <experiments>3</experiments>
</comment>
<comment type="interaction">
    <interactant intactId="EBI-3925400">
        <id>A8K8V0</id>
    </interactant>
    <interactant intactId="EBI-11956649">
        <id>P32856-2</id>
        <label>STX2</label>
    </interactant>
    <organismsDiffer>false</organismsDiffer>
    <experiments>3</experiments>
</comment>
<comment type="interaction">
    <interactant intactId="EBI-3925400">
        <id>A8K8V0</id>
    </interactant>
    <interactant intactId="EBI-10977815">
        <id>P07951-2</id>
        <label>TPM2</label>
    </interactant>
    <organismsDiffer>false</organismsDiffer>
    <experiments>3</experiments>
</comment>
<comment type="interaction">
    <interactant intactId="EBI-3925400">
        <id>A8K8V0</id>
    </interactant>
    <interactant intactId="EBI-742327">
        <id>Q15654</id>
        <label>TRIP6</label>
    </interactant>
    <organismsDiffer>false</organismsDiffer>
    <experiments>3</experiments>
</comment>
<comment type="subcellular location">
    <subcellularLocation>
        <location evidence="7">Nucleus</location>
    </subcellularLocation>
</comment>
<comment type="alternative products">
    <event type="alternative splicing"/>
    <isoform>
        <id>A8K8V0-1</id>
        <name>1</name>
        <sequence type="displayed"/>
    </isoform>
    <isoform>
        <id>A8K8V0-2</id>
        <name>2</name>
        <sequence type="described" ref="VSP_034965"/>
    </isoform>
</comment>
<comment type="similarity">
    <text evidence="7">Belongs to the krueppel C2H2-type zinc-finger protein family.</text>
</comment>
<protein>
    <recommendedName>
        <fullName>Zinc finger protein 785</fullName>
    </recommendedName>
</protein>
<accession>A8K8V0</accession>
<accession>O75701</accession>
<accession>Q8IW91</accession>
<accession>Q8WV14</accession>
<accession>Q96MN0</accession>
<feature type="chain" id="PRO_0000345630" description="Zinc finger protein 785">
    <location>
        <begin position="1"/>
        <end position="405"/>
    </location>
</feature>
<feature type="domain" description="KRAB" evidence="3">
    <location>
        <begin position="29"/>
        <end position="100"/>
    </location>
</feature>
<feature type="zinc finger region" description="C2H2-type 1" evidence="2">
    <location>
        <begin position="172"/>
        <end position="194"/>
    </location>
</feature>
<feature type="zinc finger region" description="C2H2-type 2" evidence="2">
    <location>
        <begin position="200"/>
        <end position="222"/>
    </location>
</feature>
<feature type="zinc finger region" description="C2H2-type 3" evidence="2">
    <location>
        <begin position="228"/>
        <end position="250"/>
    </location>
</feature>
<feature type="zinc finger region" description="C2H2-type 4" evidence="2">
    <location>
        <begin position="256"/>
        <end position="278"/>
    </location>
</feature>
<feature type="zinc finger region" description="C2H2-type 5" evidence="2">
    <location>
        <begin position="284"/>
        <end position="306"/>
    </location>
</feature>
<feature type="zinc finger region" description="C2H2-type 6" evidence="2">
    <location>
        <begin position="312"/>
        <end position="334"/>
    </location>
</feature>
<feature type="zinc finger region" description="C2H2-type 7" evidence="2">
    <location>
        <begin position="340"/>
        <end position="362"/>
    </location>
</feature>
<feature type="region of interest" description="Disordered" evidence="4">
    <location>
        <begin position="1"/>
        <end position="26"/>
    </location>
</feature>
<feature type="region of interest" description="Disordered" evidence="4">
    <location>
        <begin position="88"/>
        <end position="126"/>
    </location>
</feature>
<feature type="compositionally biased region" description="Basic and acidic residues" evidence="4">
    <location>
        <begin position="112"/>
        <end position="126"/>
    </location>
</feature>
<feature type="splice variant" id="VSP_034965" description="In isoform 2." evidence="6">
    <location>
        <begin position="98"/>
        <end position="112"/>
    </location>
</feature>
<feature type="sequence variant" id="VAR_076389" description="In dbSNP:rs1391888354." evidence="5">
    <original>D</original>
    <variation>G</variation>
    <location>
        <position position="316"/>
    </location>
</feature>
<feature type="sequence variant" id="VAR_076390" description="In dbSNP:rs201574418." evidence="5">
    <original>S</original>
    <variation>R</variation>
    <location>
        <position position="337"/>
    </location>
</feature>
<dbReference type="EMBL" id="AK056692">
    <property type="protein sequence ID" value="BAB71256.1"/>
    <property type="molecule type" value="mRNA"/>
</dbReference>
<dbReference type="EMBL" id="AK292465">
    <property type="protein sequence ID" value="BAF85154.1"/>
    <property type="molecule type" value="mRNA"/>
</dbReference>
<dbReference type="EMBL" id="CH471192">
    <property type="protein sequence ID" value="EAW52231.1"/>
    <property type="molecule type" value="Genomic_DNA"/>
</dbReference>
<dbReference type="EMBL" id="BC040642">
    <property type="protein sequence ID" value="AAH40642.1"/>
    <property type="molecule type" value="mRNA"/>
</dbReference>
<dbReference type="CCDS" id="CCDS10685.1">
    <molecule id="A8K8V0-1"/>
</dbReference>
<dbReference type="RefSeq" id="NP_689671.2">
    <molecule id="A8K8V0-1"/>
    <property type="nucleotide sequence ID" value="NM_152458.6"/>
</dbReference>
<dbReference type="RefSeq" id="XP_016878456.1">
    <molecule id="A8K8V0-1"/>
    <property type="nucleotide sequence ID" value="XM_017022967.3"/>
</dbReference>
<dbReference type="RefSeq" id="XP_054235653.1">
    <molecule id="A8K8V0-1"/>
    <property type="nucleotide sequence ID" value="XM_054379678.1"/>
</dbReference>
<dbReference type="SMR" id="A8K8V0"/>
<dbReference type="BioGRID" id="126995">
    <property type="interactions" value="112"/>
</dbReference>
<dbReference type="FunCoup" id="A8K8V0">
    <property type="interactions" value="57"/>
</dbReference>
<dbReference type="IntAct" id="A8K8V0">
    <property type="interactions" value="94"/>
</dbReference>
<dbReference type="STRING" id="9606.ENSP00000378642"/>
<dbReference type="iPTMnet" id="A8K8V0"/>
<dbReference type="PhosphoSitePlus" id="A8K8V0"/>
<dbReference type="BioMuta" id="ZNF785"/>
<dbReference type="jPOST" id="A8K8V0"/>
<dbReference type="MassIVE" id="A8K8V0"/>
<dbReference type="PaxDb" id="9606-ENSP00000378642"/>
<dbReference type="PeptideAtlas" id="A8K8V0"/>
<dbReference type="Antibodypedia" id="27353">
    <property type="antibodies" value="175 antibodies from 25 providers"/>
</dbReference>
<dbReference type="DNASU" id="146540"/>
<dbReference type="Ensembl" id="ENST00000395216.3">
    <molecule id="A8K8V0-1"/>
    <property type="protein sequence ID" value="ENSP00000378642.2"/>
    <property type="gene ID" value="ENSG00000197162.10"/>
</dbReference>
<dbReference type="Ensembl" id="ENST00000470110.2">
    <molecule id="A8K8V0-2"/>
    <property type="protein sequence ID" value="ENSP00000420340.1"/>
    <property type="gene ID" value="ENSG00000197162.10"/>
</dbReference>
<dbReference type="GeneID" id="146540"/>
<dbReference type="KEGG" id="hsa:146540"/>
<dbReference type="MANE-Select" id="ENST00000395216.3">
    <property type="protein sequence ID" value="ENSP00000378642.2"/>
    <property type="RefSeq nucleotide sequence ID" value="NM_152458.7"/>
    <property type="RefSeq protein sequence ID" value="NP_689671.2"/>
</dbReference>
<dbReference type="UCSC" id="uc002dyv.3">
    <molecule id="A8K8V0-1"/>
    <property type="organism name" value="human"/>
</dbReference>
<dbReference type="AGR" id="HGNC:26496"/>
<dbReference type="CTD" id="146540"/>
<dbReference type="DisGeNET" id="146540"/>
<dbReference type="GeneCards" id="ZNF785"/>
<dbReference type="HGNC" id="HGNC:26496">
    <property type="gene designation" value="ZNF785"/>
</dbReference>
<dbReference type="HPA" id="ENSG00000197162">
    <property type="expression patterns" value="Low tissue specificity"/>
</dbReference>
<dbReference type="neXtProt" id="NX_A8K8V0"/>
<dbReference type="OpenTargets" id="ENSG00000197162"/>
<dbReference type="PharmGKB" id="PA162410467"/>
<dbReference type="VEuPathDB" id="HostDB:ENSG00000197162"/>
<dbReference type="eggNOG" id="KOG1721">
    <property type="taxonomic scope" value="Eukaryota"/>
</dbReference>
<dbReference type="GeneTree" id="ENSGT00940000164477"/>
<dbReference type="HOGENOM" id="CLU_002678_13_0_1"/>
<dbReference type="InParanoid" id="A8K8V0"/>
<dbReference type="OMA" id="ATCPELC"/>
<dbReference type="OrthoDB" id="6077919at2759"/>
<dbReference type="PAN-GO" id="A8K8V0">
    <property type="GO annotations" value="3 GO annotations based on evolutionary models"/>
</dbReference>
<dbReference type="PhylomeDB" id="A8K8V0"/>
<dbReference type="TreeFam" id="TF337922"/>
<dbReference type="PathwayCommons" id="A8K8V0"/>
<dbReference type="Reactome" id="R-HSA-212436">
    <property type="pathway name" value="Generic Transcription Pathway"/>
</dbReference>
<dbReference type="SignaLink" id="A8K8V0"/>
<dbReference type="BioGRID-ORCS" id="146540">
    <property type="hits" value="13 hits in 1175 CRISPR screens"/>
</dbReference>
<dbReference type="ChiTaRS" id="ZNF785">
    <property type="organism name" value="human"/>
</dbReference>
<dbReference type="GenomeRNAi" id="146540"/>
<dbReference type="Pharos" id="A8K8V0">
    <property type="development level" value="Tdark"/>
</dbReference>
<dbReference type="PRO" id="PR:A8K8V0"/>
<dbReference type="Proteomes" id="UP000005640">
    <property type="component" value="Chromosome 16"/>
</dbReference>
<dbReference type="RNAct" id="A8K8V0">
    <property type="molecule type" value="protein"/>
</dbReference>
<dbReference type="Bgee" id="ENSG00000197162">
    <property type="expression patterns" value="Expressed in buccal mucosa cell and 176 other cell types or tissues"/>
</dbReference>
<dbReference type="ExpressionAtlas" id="A8K8V0">
    <property type="expression patterns" value="baseline and differential"/>
</dbReference>
<dbReference type="GO" id="GO:0005634">
    <property type="term" value="C:nucleus"/>
    <property type="evidence" value="ECO:0000318"/>
    <property type="project" value="GO_Central"/>
</dbReference>
<dbReference type="GO" id="GO:0000981">
    <property type="term" value="F:DNA-binding transcription factor activity, RNA polymerase II-specific"/>
    <property type="evidence" value="ECO:0000318"/>
    <property type="project" value="GO_Central"/>
</dbReference>
<dbReference type="GO" id="GO:0000977">
    <property type="term" value="F:RNA polymerase II transcription regulatory region sequence-specific DNA binding"/>
    <property type="evidence" value="ECO:0000318"/>
    <property type="project" value="GO_Central"/>
</dbReference>
<dbReference type="GO" id="GO:0008270">
    <property type="term" value="F:zinc ion binding"/>
    <property type="evidence" value="ECO:0007669"/>
    <property type="project" value="UniProtKB-KW"/>
</dbReference>
<dbReference type="GO" id="GO:0006357">
    <property type="term" value="P:regulation of transcription by RNA polymerase II"/>
    <property type="evidence" value="ECO:0000318"/>
    <property type="project" value="GO_Central"/>
</dbReference>
<dbReference type="CDD" id="cd07765">
    <property type="entry name" value="KRAB_A-box"/>
    <property type="match status" value="1"/>
</dbReference>
<dbReference type="FunFam" id="3.30.160.60:FF:002290">
    <property type="entry name" value="Weckle, isoform B"/>
    <property type="match status" value="1"/>
</dbReference>
<dbReference type="FunFam" id="3.30.160.60:FF:002766">
    <property type="entry name" value="Zinc finger protein 227-like Protein"/>
    <property type="match status" value="1"/>
</dbReference>
<dbReference type="FunFam" id="3.30.160.60:FF:000180">
    <property type="entry name" value="Zinc finger protein 689"/>
    <property type="match status" value="5"/>
</dbReference>
<dbReference type="Gene3D" id="6.10.140.140">
    <property type="match status" value="1"/>
</dbReference>
<dbReference type="Gene3D" id="3.30.160.60">
    <property type="entry name" value="Classic Zinc Finger"/>
    <property type="match status" value="7"/>
</dbReference>
<dbReference type="InterPro" id="IPR050589">
    <property type="entry name" value="Ikaros_C2H2-ZF"/>
</dbReference>
<dbReference type="InterPro" id="IPR001909">
    <property type="entry name" value="KRAB"/>
</dbReference>
<dbReference type="InterPro" id="IPR036051">
    <property type="entry name" value="KRAB_dom_sf"/>
</dbReference>
<dbReference type="InterPro" id="IPR036236">
    <property type="entry name" value="Znf_C2H2_sf"/>
</dbReference>
<dbReference type="InterPro" id="IPR013087">
    <property type="entry name" value="Znf_C2H2_type"/>
</dbReference>
<dbReference type="PANTHER" id="PTHR24404">
    <property type="entry name" value="ZINC FINGER PROTEIN"/>
    <property type="match status" value="1"/>
</dbReference>
<dbReference type="PANTHER" id="PTHR24404:SF41">
    <property type="entry name" value="ZINC FINGER PROTEIN 613"/>
    <property type="match status" value="1"/>
</dbReference>
<dbReference type="Pfam" id="PF01352">
    <property type="entry name" value="KRAB"/>
    <property type="match status" value="1"/>
</dbReference>
<dbReference type="Pfam" id="PF00096">
    <property type="entry name" value="zf-C2H2"/>
    <property type="match status" value="6"/>
</dbReference>
<dbReference type="SMART" id="SM00349">
    <property type="entry name" value="KRAB"/>
    <property type="match status" value="1"/>
</dbReference>
<dbReference type="SMART" id="SM00355">
    <property type="entry name" value="ZnF_C2H2"/>
    <property type="match status" value="7"/>
</dbReference>
<dbReference type="SUPFAM" id="SSF57667">
    <property type="entry name" value="beta-beta-alpha zinc fingers"/>
    <property type="match status" value="4"/>
</dbReference>
<dbReference type="SUPFAM" id="SSF109640">
    <property type="entry name" value="KRAB domain (Kruppel-associated box)"/>
    <property type="match status" value="1"/>
</dbReference>
<dbReference type="PROSITE" id="PS50805">
    <property type="entry name" value="KRAB"/>
    <property type="match status" value="1"/>
</dbReference>
<dbReference type="PROSITE" id="PS00028">
    <property type="entry name" value="ZINC_FINGER_C2H2_1"/>
    <property type="match status" value="7"/>
</dbReference>
<dbReference type="PROSITE" id="PS50157">
    <property type="entry name" value="ZINC_FINGER_C2H2_2"/>
    <property type="match status" value="7"/>
</dbReference>
<gene>
    <name type="primary">ZNF785</name>
</gene>
<evidence type="ECO:0000250" key="1"/>
<evidence type="ECO:0000255" key="2">
    <source>
        <dbReference type="PROSITE-ProRule" id="PRU00042"/>
    </source>
</evidence>
<evidence type="ECO:0000255" key="3">
    <source>
        <dbReference type="PROSITE-ProRule" id="PRU00119"/>
    </source>
</evidence>
<evidence type="ECO:0000256" key="4">
    <source>
        <dbReference type="SAM" id="MobiDB-lite"/>
    </source>
</evidence>
<evidence type="ECO:0000269" key="5">
    <source>
    </source>
</evidence>
<evidence type="ECO:0000303" key="6">
    <source>
    </source>
</evidence>
<evidence type="ECO:0000305" key="7"/>
<organism>
    <name type="scientific">Homo sapiens</name>
    <name type="common">Human</name>
    <dbReference type="NCBI Taxonomy" id="9606"/>
    <lineage>
        <taxon>Eukaryota</taxon>
        <taxon>Metazoa</taxon>
        <taxon>Chordata</taxon>
        <taxon>Craniata</taxon>
        <taxon>Vertebrata</taxon>
        <taxon>Euteleostomi</taxon>
        <taxon>Mammalia</taxon>
        <taxon>Eutheria</taxon>
        <taxon>Euarchontoglires</taxon>
        <taxon>Primates</taxon>
        <taxon>Haplorrhini</taxon>
        <taxon>Catarrhini</taxon>
        <taxon>Hominidae</taxon>
        <taxon>Homo</taxon>
    </lineage>
</organism>